<accession>P0A791</accession>
<accession>P31664</accession>
<accession>Q8KMY8</accession>
<proteinExistence type="inferred from homology"/>
<name>PAND_ECOL6</name>
<gene>
    <name evidence="1" type="primary">panD</name>
    <name type="ordered locus">c0160</name>
</gene>
<comment type="function">
    <text evidence="1">Catalyzes the pyruvoyl-dependent decarboxylation of aspartate to produce beta-alanine.</text>
</comment>
<comment type="catalytic activity">
    <reaction evidence="1">
        <text>L-aspartate + H(+) = beta-alanine + CO2</text>
        <dbReference type="Rhea" id="RHEA:19497"/>
        <dbReference type="ChEBI" id="CHEBI:15378"/>
        <dbReference type="ChEBI" id="CHEBI:16526"/>
        <dbReference type="ChEBI" id="CHEBI:29991"/>
        <dbReference type="ChEBI" id="CHEBI:57966"/>
        <dbReference type="EC" id="4.1.1.11"/>
    </reaction>
</comment>
<comment type="cofactor">
    <cofactor evidence="1">
        <name>pyruvate</name>
        <dbReference type="ChEBI" id="CHEBI:15361"/>
    </cofactor>
    <text evidence="1">Binds 1 pyruvoyl group covalently per subunit.</text>
</comment>
<comment type="pathway">
    <text evidence="1">Cofactor biosynthesis; (R)-pantothenate biosynthesis; beta-alanine from L-aspartate: step 1/1.</text>
</comment>
<comment type="subunit">
    <text evidence="1">Heterooctamer of four alpha and four beta subunits.</text>
</comment>
<comment type="subcellular location">
    <subcellularLocation>
        <location evidence="1">Cytoplasm</location>
    </subcellularLocation>
</comment>
<comment type="PTM">
    <text evidence="1">Is synthesized initially as an inactive proenzyme, which is activated by self-cleavage at a specific serine bond to produce a beta-subunit with a hydroxyl group at its C-terminus and an alpha-subunit with a pyruvoyl group at its N-terminus.</text>
</comment>
<comment type="similarity">
    <text evidence="1">Belongs to the PanD family.</text>
</comment>
<dbReference type="EC" id="4.1.1.11" evidence="1"/>
<dbReference type="EMBL" id="AE014075">
    <property type="protein sequence ID" value="AAN78654.1"/>
    <property type="molecule type" value="Genomic_DNA"/>
</dbReference>
<dbReference type="RefSeq" id="WP_000621515.1">
    <property type="nucleotide sequence ID" value="NZ_CP051263.1"/>
</dbReference>
<dbReference type="SMR" id="P0A791"/>
<dbReference type="STRING" id="199310.c0160"/>
<dbReference type="GeneID" id="93777305"/>
<dbReference type="KEGG" id="ecc:c0160"/>
<dbReference type="eggNOG" id="COG0853">
    <property type="taxonomic scope" value="Bacteria"/>
</dbReference>
<dbReference type="HOGENOM" id="CLU_115305_2_1_6"/>
<dbReference type="BioCyc" id="ECOL199310:C0160-MONOMER"/>
<dbReference type="UniPathway" id="UPA00028">
    <property type="reaction ID" value="UER00002"/>
</dbReference>
<dbReference type="Proteomes" id="UP000001410">
    <property type="component" value="Chromosome"/>
</dbReference>
<dbReference type="GO" id="GO:0005829">
    <property type="term" value="C:cytosol"/>
    <property type="evidence" value="ECO:0007669"/>
    <property type="project" value="TreeGrafter"/>
</dbReference>
<dbReference type="GO" id="GO:0004068">
    <property type="term" value="F:aspartate 1-decarboxylase activity"/>
    <property type="evidence" value="ECO:0007669"/>
    <property type="project" value="UniProtKB-UniRule"/>
</dbReference>
<dbReference type="GO" id="GO:0006523">
    <property type="term" value="P:alanine biosynthetic process"/>
    <property type="evidence" value="ECO:0007669"/>
    <property type="project" value="InterPro"/>
</dbReference>
<dbReference type="GO" id="GO:0015940">
    <property type="term" value="P:pantothenate biosynthetic process"/>
    <property type="evidence" value="ECO:0007669"/>
    <property type="project" value="UniProtKB-UniRule"/>
</dbReference>
<dbReference type="CDD" id="cd06919">
    <property type="entry name" value="Asp_decarbox"/>
    <property type="match status" value="1"/>
</dbReference>
<dbReference type="FunFam" id="2.40.40.20:FF:000004">
    <property type="entry name" value="Aspartate 1-decarboxylase"/>
    <property type="match status" value="1"/>
</dbReference>
<dbReference type="Gene3D" id="2.40.40.20">
    <property type="match status" value="1"/>
</dbReference>
<dbReference type="HAMAP" id="MF_00446">
    <property type="entry name" value="PanD"/>
    <property type="match status" value="1"/>
</dbReference>
<dbReference type="InterPro" id="IPR009010">
    <property type="entry name" value="Asp_de-COase-like_dom_sf"/>
</dbReference>
<dbReference type="InterPro" id="IPR003190">
    <property type="entry name" value="Asp_decarbox"/>
</dbReference>
<dbReference type="NCBIfam" id="TIGR00223">
    <property type="entry name" value="panD"/>
    <property type="match status" value="1"/>
</dbReference>
<dbReference type="PANTHER" id="PTHR21012">
    <property type="entry name" value="ASPARTATE 1-DECARBOXYLASE"/>
    <property type="match status" value="1"/>
</dbReference>
<dbReference type="PANTHER" id="PTHR21012:SF0">
    <property type="entry name" value="ASPARTATE 1-DECARBOXYLASE"/>
    <property type="match status" value="1"/>
</dbReference>
<dbReference type="Pfam" id="PF02261">
    <property type="entry name" value="Asp_decarbox"/>
    <property type="match status" value="1"/>
</dbReference>
<dbReference type="PIRSF" id="PIRSF006246">
    <property type="entry name" value="Asp_decarbox"/>
    <property type="match status" value="1"/>
</dbReference>
<dbReference type="SUPFAM" id="SSF50692">
    <property type="entry name" value="ADC-like"/>
    <property type="match status" value="1"/>
</dbReference>
<sequence length="126" mass="13834">MIRTMLQGKLHRVKVTHADLHYEGSCAIDQDFLDAAGILENEAIDIWNVTNGKRFSTYAIAAERGSRIISVNGAAAHCASVGDIVIIASFVTMPDEEARTWRPNVAYFEGDNEMKRTAKAIPVQVA</sequence>
<reference key="1">
    <citation type="journal article" date="2002" name="Proc. Natl. Acad. Sci. U.S.A.">
        <title>Extensive mosaic structure revealed by the complete genome sequence of uropathogenic Escherichia coli.</title>
        <authorList>
            <person name="Welch R.A."/>
            <person name="Burland V."/>
            <person name="Plunkett G. III"/>
            <person name="Redford P."/>
            <person name="Roesch P."/>
            <person name="Rasko D."/>
            <person name="Buckles E.L."/>
            <person name="Liou S.-R."/>
            <person name="Boutin A."/>
            <person name="Hackett J."/>
            <person name="Stroud D."/>
            <person name="Mayhew G.F."/>
            <person name="Rose D.J."/>
            <person name="Zhou S."/>
            <person name="Schwartz D.C."/>
            <person name="Perna N.T."/>
            <person name="Mobley H.L.T."/>
            <person name="Donnenberg M.S."/>
            <person name="Blattner F.R."/>
        </authorList>
    </citation>
    <scope>NUCLEOTIDE SEQUENCE [LARGE SCALE GENOMIC DNA]</scope>
    <source>
        <strain>CFT073 / ATCC 700928 / UPEC</strain>
    </source>
</reference>
<evidence type="ECO:0000255" key="1">
    <source>
        <dbReference type="HAMAP-Rule" id="MF_00446"/>
    </source>
</evidence>
<protein>
    <recommendedName>
        <fullName evidence="1">Aspartate 1-decarboxylase</fullName>
        <ecNumber evidence="1">4.1.1.11</ecNumber>
    </recommendedName>
    <alternativeName>
        <fullName evidence="1">Aspartate alpha-decarboxylase</fullName>
    </alternativeName>
    <component>
        <recommendedName>
            <fullName evidence="1">Aspartate 1-decarboxylase beta chain</fullName>
        </recommendedName>
    </component>
    <component>
        <recommendedName>
            <fullName evidence="1">Aspartate 1-decarboxylase alpha chain</fullName>
        </recommendedName>
    </component>
</protein>
<organism>
    <name type="scientific">Escherichia coli O6:H1 (strain CFT073 / ATCC 700928 / UPEC)</name>
    <dbReference type="NCBI Taxonomy" id="199310"/>
    <lineage>
        <taxon>Bacteria</taxon>
        <taxon>Pseudomonadati</taxon>
        <taxon>Pseudomonadota</taxon>
        <taxon>Gammaproteobacteria</taxon>
        <taxon>Enterobacterales</taxon>
        <taxon>Enterobacteriaceae</taxon>
        <taxon>Escherichia</taxon>
    </lineage>
</organism>
<feature type="chain" id="PRO_0000023077" description="Aspartate 1-decarboxylase beta chain" evidence="1">
    <location>
        <begin position="1"/>
        <end position="24"/>
    </location>
</feature>
<feature type="chain" id="PRO_0000023078" description="Aspartate 1-decarboxylase alpha chain" evidence="1">
    <location>
        <begin position="25"/>
        <end position="126"/>
    </location>
</feature>
<feature type="active site" description="Schiff-base intermediate with substrate; via pyruvic acid" evidence="1">
    <location>
        <position position="25"/>
    </location>
</feature>
<feature type="active site" description="Proton donor" evidence="1">
    <location>
        <position position="58"/>
    </location>
</feature>
<feature type="binding site" evidence="1">
    <location>
        <position position="57"/>
    </location>
    <ligand>
        <name>substrate</name>
    </ligand>
</feature>
<feature type="binding site" evidence="1">
    <location>
        <begin position="73"/>
        <end position="75"/>
    </location>
    <ligand>
        <name>substrate</name>
    </ligand>
</feature>
<feature type="modified residue" description="Pyruvic acid (Ser)" evidence="1">
    <location>
        <position position="25"/>
    </location>
</feature>
<keyword id="KW-0068">Autocatalytic cleavage</keyword>
<keyword id="KW-0963">Cytoplasm</keyword>
<keyword id="KW-0210">Decarboxylase</keyword>
<keyword id="KW-0456">Lyase</keyword>
<keyword id="KW-0566">Pantothenate biosynthesis</keyword>
<keyword id="KW-0670">Pyruvate</keyword>
<keyword id="KW-1185">Reference proteome</keyword>
<keyword id="KW-0704">Schiff base</keyword>
<keyword id="KW-0865">Zymogen</keyword>